<keyword id="KW-0067">ATP-binding</keyword>
<keyword id="KW-0418">Kinase</keyword>
<keyword id="KW-0441">Lipid A biosynthesis</keyword>
<keyword id="KW-0444">Lipid biosynthesis</keyword>
<keyword id="KW-0443">Lipid metabolism</keyword>
<keyword id="KW-0547">Nucleotide-binding</keyword>
<keyword id="KW-1185">Reference proteome</keyword>
<keyword id="KW-0808">Transferase</keyword>
<gene>
    <name evidence="1" type="primary">lpxK</name>
    <name type="ordered locus">Swoo_1820</name>
</gene>
<dbReference type="EC" id="2.7.1.130" evidence="1"/>
<dbReference type="EMBL" id="CP000961">
    <property type="protein sequence ID" value="ACA86104.1"/>
    <property type="molecule type" value="Genomic_DNA"/>
</dbReference>
<dbReference type="RefSeq" id="WP_012324450.1">
    <property type="nucleotide sequence ID" value="NC_010506.1"/>
</dbReference>
<dbReference type="SMR" id="B1KNM7"/>
<dbReference type="STRING" id="392500.Swoo_1820"/>
<dbReference type="KEGG" id="swd:Swoo_1820"/>
<dbReference type="eggNOG" id="COG1663">
    <property type="taxonomic scope" value="Bacteria"/>
</dbReference>
<dbReference type="HOGENOM" id="CLU_038816_2_0_6"/>
<dbReference type="UniPathway" id="UPA00359">
    <property type="reaction ID" value="UER00482"/>
</dbReference>
<dbReference type="Proteomes" id="UP000002168">
    <property type="component" value="Chromosome"/>
</dbReference>
<dbReference type="GO" id="GO:0005886">
    <property type="term" value="C:plasma membrane"/>
    <property type="evidence" value="ECO:0007669"/>
    <property type="project" value="TreeGrafter"/>
</dbReference>
<dbReference type="GO" id="GO:0005524">
    <property type="term" value="F:ATP binding"/>
    <property type="evidence" value="ECO:0007669"/>
    <property type="project" value="UniProtKB-UniRule"/>
</dbReference>
<dbReference type="GO" id="GO:0009029">
    <property type="term" value="F:tetraacyldisaccharide 4'-kinase activity"/>
    <property type="evidence" value="ECO:0007669"/>
    <property type="project" value="UniProtKB-UniRule"/>
</dbReference>
<dbReference type="GO" id="GO:0009245">
    <property type="term" value="P:lipid A biosynthetic process"/>
    <property type="evidence" value="ECO:0007669"/>
    <property type="project" value="UniProtKB-UniRule"/>
</dbReference>
<dbReference type="GO" id="GO:0009244">
    <property type="term" value="P:lipopolysaccharide core region biosynthetic process"/>
    <property type="evidence" value="ECO:0007669"/>
    <property type="project" value="TreeGrafter"/>
</dbReference>
<dbReference type="HAMAP" id="MF_00409">
    <property type="entry name" value="LpxK"/>
    <property type="match status" value="1"/>
</dbReference>
<dbReference type="InterPro" id="IPR003758">
    <property type="entry name" value="LpxK"/>
</dbReference>
<dbReference type="InterPro" id="IPR027417">
    <property type="entry name" value="P-loop_NTPase"/>
</dbReference>
<dbReference type="NCBIfam" id="TIGR00682">
    <property type="entry name" value="lpxK"/>
    <property type="match status" value="1"/>
</dbReference>
<dbReference type="PANTHER" id="PTHR42724">
    <property type="entry name" value="TETRAACYLDISACCHARIDE 4'-KINASE"/>
    <property type="match status" value="1"/>
</dbReference>
<dbReference type="PANTHER" id="PTHR42724:SF1">
    <property type="entry name" value="TETRAACYLDISACCHARIDE 4'-KINASE, MITOCHONDRIAL-RELATED"/>
    <property type="match status" value="1"/>
</dbReference>
<dbReference type="Pfam" id="PF02606">
    <property type="entry name" value="LpxK"/>
    <property type="match status" value="1"/>
</dbReference>
<dbReference type="SUPFAM" id="SSF52540">
    <property type="entry name" value="P-loop containing nucleoside triphosphate hydrolases"/>
    <property type="match status" value="1"/>
</dbReference>
<comment type="function">
    <text evidence="1">Transfers the gamma-phosphate of ATP to the 4'-position of a tetraacyldisaccharide 1-phosphate intermediate (termed DS-1-P) to form tetraacyldisaccharide 1,4'-bis-phosphate (lipid IVA).</text>
</comment>
<comment type="catalytic activity">
    <reaction evidence="1">
        <text>a lipid A disaccharide + ATP = a lipid IVA + ADP + H(+)</text>
        <dbReference type="Rhea" id="RHEA:67840"/>
        <dbReference type="ChEBI" id="CHEBI:15378"/>
        <dbReference type="ChEBI" id="CHEBI:30616"/>
        <dbReference type="ChEBI" id="CHEBI:176343"/>
        <dbReference type="ChEBI" id="CHEBI:176425"/>
        <dbReference type="ChEBI" id="CHEBI:456216"/>
        <dbReference type="EC" id="2.7.1.130"/>
    </reaction>
</comment>
<comment type="pathway">
    <text evidence="1">Glycolipid biosynthesis; lipid IV(A) biosynthesis; lipid IV(A) from (3R)-3-hydroxytetradecanoyl-[acyl-carrier-protein] and UDP-N-acetyl-alpha-D-glucosamine: step 6/6.</text>
</comment>
<comment type="similarity">
    <text evidence="1">Belongs to the LpxK family.</text>
</comment>
<protein>
    <recommendedName>
        <fullName evidence="1">Tetraacyldisaccharide 4'-kinase</fullName>
        <ecNumber evidence="1">2.7.1.130</ecNumber>
    </recommendedName>
    <alternativeName>
        <fullName evidence="1">Lipid A 4'-kinase</fullName>
    </alternativeName>
</protein>
<organism>
    <name type="scientific">Shewanella woodyi (strain ATCC 51908 / MS32)</name>
    <dbReference type="NCBI Taxonomy" id="392500"/>
    <lineage>
        <taxon>Bacteria</taxon>
        <taxon>Pseudomonadati</taxon>
        <taxon>Pseudomonadota</taxon>
        <taxon>Gammaproteobacteria</taxon>
        <taxon>Alteromonadales</taxon>
        <taxon>Shewanellaceae</taxon>
        <taxon>Shewanella</taxon>
    </lineage>
</organism>
<feature type="chain" id="PRO_0000340864" description="Tetraacyldisaccharide 4'-kinase">
    <location>
        <begin position="1"/>
        <end position="341"/>
    </location>
</feature>
<feature type="binding site" evidence="1">
    <location>
        <begin position="65"/>
        <end position="72"/>
    </location>
    <ligand>
        <name>ATP</name>
        <dbReference type="ChEBI" id="CHEBI:30616"/>
    </ligand>
</feature>
<accession>B1KNM7</accession>
<sequence length="341" mass="37902">MQDFVNRLWYPKADDCIGYRGIKWLLTPLSLLFWCVSSLRRLLFKLGIKAAVSLPVPVIVVGNITVGGSGKTPTVIYLIELLRAQGLNPGVVSRGYGVKIDGVKIVEPHLGADSVGDEPAMIVARTQVPMVIGSDRVSAAKCLIERFDVDIIISDDGLQHYKMARDVELLILDGERRFGNELLLPAGPLRELTGRQKTVDFTIVNGEAKEGEFQMILEPTRFIPVSPRSELVFEPVEHVVAIAGIGNPERFFTTLAQSGVEVIKTKAFEDHQKFSLTQITQVTGNSPVLMTEKDAVKCRDFAKENWWYLAVDAKLAENFDQRLMDKVRQVIAVKQGNRDVV</sequence>
<reference key="1">
    <citation type="submission" date="2008-02" db="EMBL/GenBank/DDBJ databases">
        <title>Complete sequence of Shewanella woodyi ATCC 51908.</title>
        <authorList>
            <consortium name="US DOE Joint Genome Institute"/>
            <person name="Copeland A."/>
            <person name="Lucas S."/>
            <person name="Lapidus A."/>
            <person name="Glavina del Rio T."/>
            <person name="Dalin E."/>
            <person name="Tice H."/>
            <person name="Bruce D."/>
            <person name="Goodwin L."/>
            <person name="Pitluck S."/>
            <person name="Sims D."/>
            <person name="Brettin T."/>
            <person name="Detter J.C."/>
            <person name="Han C."/>
            <person name="Kuske C.R."/>
            <person name="Schmutz J."/>
            <person name="Larimer F."/>
            <person name="Land M."/>
            <person name="Hauser L."/>
            <person name="Kyrpides N."/>
            <person name="Lykidis A."/>
            <person name="Zhao J.-S."/>
            <person name="Richardson P."/>
        </authorList>
    </citation>
    <scope>NUCLEOTIDE SEQUENCE [LARGE SCALE GENOMIC DNA]</scope>
    <source>
        <strain>ATCC 51908 / MS32</strain>
    </source>
</reference>
<name>LPXK_SHEWM</name>
<proteinExistence type="inferred from homology"/>
<evidence type="ECO:0000255" key="1">
    <source>
        <dbReference type="HAMAP-Rule" id="MF_00409"/>
    </source>
</evidence>